<comment type="function">
    <text evidence="1 6 7">Centriole wall protein that localizes to mature centrioles and regulates centriole and cilia biogenesis (PubMed:36206347, PubMed:36756949). Involved in centrosome duplication: required for efficient PLK4 centrosomal localization and PLK4-induced overduplication of centrioles (By similarity). Involved in cilium biogenesis and controls cilium length (PubMed:36206347, PubMed:36756949). Acts as a regulator of protein stability by preventing ubiquitination of centrosomal proteins, such as CCP110 and tektins (PubMed:36206347). Associates with the EDVP complex, preventing ubiquitination and degradation of CCP110 (By similarity). Promotes deubiquitination of tektin proteins (TEKT1, TEKT2, TEK3, TEKT4 and TEKT5) via its interaction with USP16 (PubMed:36206347).</text>
</comment>
<comment type="subunit">
    <text evidence="1 6 7">Interacts with PLK4 (By similarity). Interacts with FAM161A (By similarity). Interacts with IFT20; regulating IFT20 stability and localization (PubMed:36756949). Interacts with TTC21A; regulating TTC21A stability and localization (PubMed:36756949). Interacts with USP16; promoting USP16-dependent deubiquitination of tektins (PubMed:36206347). Interacts with DCAF1/VPRBP; promoting localization of the EDVP complex to centrosomes (By similarity). Interacts with CEP350; promoting CEP78 localization to centrosome and centriole (By similarity).</text>
</comment>
<comment type="subcellular location">
    <subcellularLocation>
        <location evidence="1">Cytoplasm</location>
        <location evidence="1">Cytoskeleton</location>
        <location evidence="1">Microtubule organizing center</location>
        <location evidence="1">Centrosome</location>
    </subcellularLocation>
    <subcellularLocation>
        <location evidence="6">Cytoplasm</location>
        <location evidence="6">Cytoskeleton</location>
        <location evidence="6">Microtubule organizing center</location>
        <location evidence="6">Centrosome</location>
        <location evidence="6">Centriole</location>
    </subcellularLocation>
    <subcellularLocation>
        <location evidence="1">Cytoplasm</location>
        <location evidence="1">Cytoskeleton</location>
        <location evidence="1">Cilium basal body</location>
    </subcellularLocation>
    <text evidence="5">Mainly localizes at the centriolar wall, but also found in the pericentriolar material. Expressed in photoreceptor inner segment.</text>
</comment>
<comment type="tissue specificity">
    <text evidence="5">Expressed by photoreceptor cells in the retina.</text>
</comment>
<comment type="developmental stage">
    <text evidence="4 5">Expressed at all stages of development with higher expression during embryogenesis.</text>
</comment>
<comment type="disruption phenotype">
    <text evidence="6 7">Male mice are sterile due to aberrant sperm morphology and almost null sperm motility (PubMed:36206347, PubMed:36756949). Sperm flagella show impaired microtubule arrangements and elongated centrioles (PubMed:36756949). Mice also display defects in retina and outer hair cells of the cochlea (PubMed:36206347).</text>
</comment>
<comment type="similarity">
    <text evidence="9">Belongs to the CEP78 family.</text>
</comment>
<keyword id="KW-0966">Cell projection</keyword>
<keyword id="KW-0969">Cilium</keyword>
<keyword id="KW-0970">Cilium biogenesis/degradation</keyword>
<keyword id="KW-0175">Coiled coil</keyword>
<keyword id="KW-0963">Cytoplasm</keyword>
<keyword id="KW-0206">Cytoskeleton</keyword>
<keyword id="KW-0597">Phosphoprotein</keyword>
<keyword id="KW-1185">Reference proteome</keyword>
<feature type="chain" id="PRO_0000291953" description="Centrosomal protein of 78 kDa">
    <location>
        <begin position="1"/>
        <end position="790"/>
    </location>
</feature>
<feature type="region of interest" description="Disordered" evidence="3">
    <location>
        <begin position="325"/>
        <end position="345"/>
    </location>
</feature>
<feature type="region of interest" description="Disordered" evidence="3">
    <location>
        <begin position="362"/>
        <end position="385"/>
    </location>
</feature>
<feature type="region of interest" description="Disordered" evidence="3">
    <location>
        <begin position="428"/>
        <end position="462"/>
    </location>
</feature>
<feature type="region of interest" description="Disordered" evidence="3">
    <location>
        <begin position="654"/>
        <end position="732"/>
    </location>
</feature>
<feature type="region of interest" description="Disordered" evidence="3">
    <location>
        <begin position="756"/>
        <end position="790"/>
    </location>
</feature>
<feature type="coiled-coil region" evidence="2">
    <location>
        <begin position="455"/>
        <end position="510"/>
    </location>
</feature>
<feature type="compositionally biased region" description="Low complexity" evidence="3">
    <location>
        <begin position="428"/>
        <end position="438"/>
    </location>
</feature>
<feature type="compositionally biased region" description="Basic and acidic residues" evidence="3">
    <location>
        <begin position="693"/>
        <end position="708"/>
    </location>
</feature>
<feature type="compositionally biased region" description="Basic and acidic residues" evidence="3">
    <location>
        <begin position="721"/>
        <end position="732"/>
    </location>
</feature>
<feature type="modified residue" description="Phosphoserine" evidence="1">
    <location>
        <position position="330"/>
    </location>
</feature>
<feature type="modified residue" description="Phosphoserine" evidence="1">
    <location>
        <position position="332"/>
    </location>
</feature>
<reference key="1">
    <citation type="journal article" date="2004" name="Genome Res.">
        <title>The status, quality, and expansion of the NIH full-length cDNA project: the Mammalian Gene Collection (MGC).</title>
        <authorList>
            <consortium name="The MGC Project Team"/>
        </authorList>
    </citation>
    <scope>NUCLEOTIDE SEQUENCE [LARGE SCALE MRNA]</scope>
    <source>
        <strain>C57BL/6J</strain>
        <tissue>Brain</tissue>
    </source>
</reference>
<reference key="2">
    <citation type="journal article" date="2016" name="Am. J. Hum. Genet.">
        <title>Mutations in CEP78 cause cone-rod dystrophy and hearing loss associated with primary-cilia defects.</title>
        <authorList>
            <person name="Nikopoulos K."/>
            <person name="Farinelli P."/>
            <person name="Giangreco B."/>
            <person name="Tsika C."/>
            <person name="Royer-Bertrand B."/>
            <person name="Mbefo M.K."/>
            <person name="Bedoni N."/>
            <person name="Kjellstroem U."/>
            <person name="El Zaoui I."/>
            <person name="Di Gioia S.A."/>
            <person name="Balzano S."/>
            <person name="Cisarova K."/>
            <person name="Messina A."/>
            <person name="Decembrini S."/>
            <person name="Plainis S."/>
            <person name="Blazaki S.V."/>
            <person name="Khan M.I."/>
            <person name="Micheal S."/>
            <person name="Boldt K."/>
            <person name="Ueffing M."/>
            <person name="Moulin A.P."/>
            <person name="Cremers F.P."/>
            <person name="Roepman R."/>
            <person name="Arsenijevic Y."/>
            <person name="Tsilimbaris M.K."/>
            <person name="Andreasson S."/>
            <person name="Rivolta C."/>
        </authorList>
    </citation>
    <scope>DEVELOPMENTAL STAGE</scope>
</reference>
<reference key="3">
    <citation type="journal article" date="2016" name="Am. J. Hum. Genet.">
        <title>Bi-allelic truncating mutations in CEP78, encoding centrosomal protein 78, cause cone-rod degeneration with sensorineural hearing loss.</title>
        <authorList>
            <person name="Namburi P."/>
            <person name="Ratnapriya R."/>
            <person name="Khateb S."/>
            <person name="Lazar C.H."/>
            <person name="Kinarty Y."/>
            <person name="Obolensky A."/>
            <person name="Erdinest I."/>
            <person name="Marks-Ohana D."/>
            <person name="Pras E."/>
            <person name="Ben-Yosef T."/>
            <person name="Newman H."/>
            <person name="Gross M."/>
            <person name="Swaroop A."/>
            <person name="Banin E."/>
            <person name="Sharon D."/>
        </authorList>
    </citation>
    <scope>TISSUE SPECIFICITY</scope>
    <scope>DEVELOPMENTAL STAGE</scope>
</reference>
<reference key="4">
    <citation type="journal article" date="2022" name="Sci. Adv.">
        <title>Loss-of-function mutations in CEP78 cause male infertility in humans and mice.</title>
        <authorList>
            <person name="Zhang X."/>
            <person name="Zheng R."/>
            <person name="Liang C."/>
            <person name="Liu H."/>
            <person name="Zhang X."/>
            <person name="Ma Y."/>
            <person name="Liu M."/>
            <person name="Zhang W."/>
            <person name="Yang Y."/>
            <person name="Liu M."/>
            <person name="Jiang C."/>
            <person name="Ren Q."/>
            <person name="Wang Y."/>
            <person name="Chen S."/>
            <person name="Yang Y."/>
            <person name="Shen Y."/>
        </authorList>
    </citation>
    <scope>FUNCTION</scope>
    <scope>SUBCELLULAR LOCATION</scope>
    <scope>INTERACTION WITH USP16</scope>
    <scope>DISRUPTION PHENOTYPE</scope>
</reference>
<reference key="5">
    <citation type="journal article" date="2023" name="Elife">
        <title>Absence of CEP78 causes photoreceptor and sperm flagella impairments in mice and a human individual.</title>
        <authorList>
            <person name="Zhu T."/>
            <person name="Zhang Y."/>
            <person name="Sheng X."/>
            <person name="Zhang X."/>
            <person name="Chen Y."/>
            <person name="Zhu H."/>
            <person name="Guo Y."/>
            <person name="Qi Y."/>
            <person name="Zhao Y."/>
            <person name="Zhou Q."/>
            <person name="Chen X."/>
            <person name="Guo X."/>
            <person name="Zhao C."/>
        </authorList>
    </citation>
    <scope>FUNCTION</scope>
    <scope>INTERACTION WITH TTC21A AND IFT20</scope>
    <scope>DISRUPTION PHENOTYPE</scope>
</reference>
<protein>
    <recommendedName>
        <fullName evidence="9">Centrosomal protein of 78 kDa</fullName>
        <shortName evidence="8">Cep78</shortName>
    </recommendedName>
</protein>
<evidence type="ECO:0000250" key="1">
    <source>
        <dbReference type="UniProtKB" id="Q5JTW2"/>
    </source>
</evidence>
<evidence type="ECO:0000255" key="2"/>
<evidence type="ECO:0000256" key="3">
    <source>
        <dbReference type="SAM" id="MobiDB-lite"/>
    </source>
</evidence>
<evidence type="ECO:0000269" key="4">
    <source>
    </source>
</evidence>
<evidence type="ECO:0000269" key="5">
    <source>
    </source>
</evidence>
<evidence type="ECO:0000269" key="6">
    <source>
    </source>
</evidence>
<evidence type="ECO:0000269" key="7">
    <source>
    </source>
</evidence>
<evidence type="ECO:0000303" key="8">
    <source>
    </source>
</evidence>
<evidence type="ECO:0000305" key="9"/>
<evidence type="ECO:0000312" key="10">
    <source>
        <dbReference type="MGI" id="MGI:1924386"/>
    </source>
</evidence>
<accession>Q6IRU7</accession>
<proteinExistence type="evidence at protein level"/>
<organism>
    <name type="scientific">Mus musculus</name>
    <name type="common">Mouse</name>
    <dbReference type="NCBI Taxonomy" id="10090"/>
    <lineage>
        <taxon>Eukaryota</taxon>
        <taxon>Metazoa</taxon>
        <taxon>Chordata</taxon>
        <taxon>Craniata</taxon>
        <taxon>Vertebrata</taxon>
        <taxon>Euteleostomi</taxon>
        <taxon>Mammalia</taxon>
        <taxon>Eutheria</taxon>
        <taxon>Euarchontoglires</taxon>
        <taxon>Glires</taxon>
        <taxon>Rodentia</taxon>
        <taxon>Myomorpha</taxon>
        <taxon>Muroidea</taxon>
        <taxon>Muridae</taxon>
        <taxon>Murinae</taxon>
        <taxon>Mus</taxon>
        <taxon>Mus</taxon>
    </lineage>
</organism>
<dbReference type="EMBL" id="BC070400">
    <property type="protein sequence ID" value="AAH70400.1"/>
    <property type="molecule type" value="mRNA"/>
</dbReference>
<dbReference type="CCDS" id="CCDS29682.1"/>
<dbReference type="RefSeq" id="NP_932136.2">
    <property type="nucleotide sequence ID" value="NM_198019.2"/>
</dbReference>
<dbReference type="SMR" id="Q6IRU7"/>
<dbReference type="BioGRID" id="228987">
    <property type="interactions" value="36"/>
</dbReference>
<dbReference type="FunCoup" id="Q6IRU7">
    <property type="interactions" value="1760"/>
</dbReference>
<dbReference type="IntAct" id="Q6IRU7">
    <property type="interactions" value="35"/>
</dbReference>
<dbReference type="STRING" id="10090.ENSMUSP00000037596"/>
<dbReference type="iPTMnet" id="Q6IRU7"/>
<dbReference type="PhosphoSitePlus" id="Q6IRU7"/>
<dbReference type="PaxDb" id="10090-ENSMUSP00000037596"/>
<dbReference type="PeptideAtlas" id="Q6IRU7"/>
<dbReference type="ProteomicsDB" id="280003"/>
<dbReference type="Pumba" id="Q6IRU7"/>
<dbReference type="Antibodypedia" id="27392">
    <property type="antibodies" value="80 antibodies from 21 providers"/>
</dbReference>
<dbReference type="DNASU" id="208518"/>
<dbReference type="Ensembl" id="ENSMUST00000047704.8">
    <property type="protein sequence ID" value="ENSMUSP00000037596.8"/>
    <property type="gene ID" value="ENSMUSG00000041491.9"/>
</dbReference>
<dbReference type="GeneID" id="208518"/>
<dbReference type="KEGG" id="mmu:208518"/>
<dbReference type="UCSC" id="uc008gwq.1">
    <property type="organism name" value="mouse"/>
</dbReference>
<dbReference type="AGR" id="MGI:1924386"/>
<dbReference type="CTD" id="84131"/>
<dbReference type="MGI" id="MGI:1924386">
    <property type="gene designation" value="Cep78"/>
</dbReference>
<dbReference type="VEuPathDB" id="HostDB:ENSMUSG00000041491"/>
<dbReference type="eggNOG" id="KOG4308">
    <property type="taxonomic scope" value="Eukaryota"/>
</dbReference>
<dbReference type="GeneTree" id="ENSGT00390000013287"/>
<dbReference type="HOGENOM" id="CLU_021273_0_0_1"/>
<dbReference type="InParanoid" id="Q6IRU7"/>
<dbReference type="OMA" id="MTLKLCK"/>
<dbReference type="OrthoDB" id="78308at2759"/>
<dbReference type="PhylomeDB" id="Q6IRU7"/>
<dbReference type="TreeFam" id="TF328928"/>
<dbReference type="Reactome" id="R-MMU-2565942">
    <property type="pathway name" value="Regulation of PLK1 Activity at G2/M Transition"/>
</dbReference>
<dbReference type="Reactome" id="R-MMU-380259">
    <property type="pathway name" value="Loss of Nlp from mitotic centrosomes"/>
</dbReference>
<dbReference type="Reactome" id="R-MMU-380270">
    <property type="pathway name" value="Recruitment of mitotic centrosome proteins and complexes"/>
</dbReference>
<dbReference type="Reactome" id="R-MMU-380284">
    <property type="pathway name" value="Loss of proteins required for interphase microtubule organization from the centrosome"/>
</dbReference>
<dbReference type="Reactome" id="R-MMU-380320">
    <property type="pathway name" value="Recruitment of NuMA to mitotic centrosomes"/>
</dbReference>
<dbReference type="Reactome" id="R-MMU-5620912">
    <property type="pathway name" value="Anchoring of the basal body to the plasma membrane"/>
</dbReference>
<dbReference type="Reactome" id="R-MMU-8854518">
    <property type="pathway name" value="AURKA Activation by TPX2"/>
</dbReference>
<dbReference type="BioGRID-ORCS" id="208518">
    <property type="hits" value="4 hits in 76 CRISPR screens"/>
</dbReference>
<dbReference type="ChiTaRS" id="Cep78">
    <property type="organism name" value="mouse"/>
</dbReference>
<dbReference type="PRO" id="PR:Q6IRU7"/>
<dbReference type="Proteomes" id="UP000000589">
    <property type="component" value="Chromosome 19"/>
</dbReference>
<dbReference type="RNAct" id="Q6IRU7">
    <property type="molecule type" value="protein"/>
</dbReference>
<dbReference type="Bgee" id="ENSMUSG00000041491">
    <property type="expression patterns" value="Expressed in spermatocyte and 186 other cell types or tissues"/>
</dbReference>
<dbReference type="ExpressionAtlas" id="Q6IRU7">
    <property type="expression patterns" value="baseline and differential"/>
</dbReference>
<dbReference type="GO" id="GO:0005814">
    <property type="term" value="C:centriole"/>
    <property type="evidence" value="ECO:0000250"/>
    <property type="project" value="UniProtKB"/>
</dbReference>
<dbReference type="GO" id="GO:0005813">
    <property type="term" value="C:centrosome"/>
    <property type="evidence" value="ECO:0000266"/>
    <property type="project" value="MGI"/>
</dbReference>
<dbReference type="GO" id="GO:0036064">
    <property type="term" value="C:ciliary basal body"/>
    <property type="evidence" value="ECO:0000250"/>
    <property type="project" value="UniProtKB"/>
</dbReference>
<dbReference type="GO" id="GO:0005737">
    <property type="term" value="C:cytoplasm"/>
    <property type="evidence" value="ECO:0007669"/>
    <property type="project" value="UniProtKB-KW"/>
</dbReference>
<dbReference type="GO" id="GO:0044782">
    <property type="term" value="P:cilium organization"/>
    <property type="evidence" value="ECO:0000315"/>
    <property type="project" value="UniProtKB"/>
</dbReference>
<dbReference type="GO" id="GO:0030317">
    <property type="term" value="P:flagellated sperm motility"/>
    <property type="evidence" value="ECO:0000315"/>
    <property type="project" value="UniProtKB"/>
</dbReference>
<dbReference type="GO" id="GO:0031397">
    <property type="term" value="P:negative regulation of protein ubiquitination"/>
    <property type="evidence" value="ECO:0000250"/>
    <property type="project" value="UniProtKB"/>
</dbReference>
<dbReference type="GO" id="GO:0071539">
    <property type="term" value="P:protein localization to centrosome"/>
    <property type="evidence" value="ECO:0000250"/>
    <property type="project" value="UniProtKB"/>
</dbReference>
<dbReference type="GO" id="GO:0061512">
    <property type="term" value="P:protein localization to cilium"/>
    <property type="evidence" value="ECO:0000315"/>
    <property type="project" value="UniProtKB"/>
</dbReference>
<dbReference type="FunFam" id="3.80.10.10:FF:000057">
    <property type="entry name" value="Centrosomal protein of 78 kDa"/>
    <property type="match status" value="1"/>
</dbReference>
<dbReference type="FunFam" id="3.80.10.10:FF:000070">
    <property type="entry name" value="Centrosomal protein of 78 kDa"/>
    <property type="match status" value="1"/>
</dbReference>
<dbReference type="Gene3D" id="3.80.10.10">
    <property type="entry name" value="Ribonuclease Inhibitor"/>
    <property type="match status" value="2"/>
</dbReference>
<dbReference type="InterPro" id="IPR026212">
    <property type="entry name" value="Cep78"/>
</dbReference>
<dbReference type="InterPro" id="IPR001611">
    <property type="entry name" value="Leu-rich_rpt"/>
</dbReference>
<dbReference type="InterPro" id="IPR032675">
    <property type="entry name" value="LRR_dom_sf"/>
</dbReference>
<dbReference type="PANTHER" id="PTHR24110">
    <property type="entry name" value="CENTROSOMAL PROTEIN OF 78 KDA"/>
    <property type="match status" value="1"/>
</dbReference>
<dbReference type="PANTHER" id="PTHR24110:SF3">
    <property type="entry name" value="CENTROSOMAL PROTEIN OF 78 KDA"/>
    <property type="match status" value="1"/>
</dbReference>
<dbReference type="Pfam" id="PF13516">
    <property type="entry name" value="LRR_6"/>
    <property type="match status" value="3"/>
</dbReference>
<dbReference type="PRINTS" id="PR02062">
    <property type="entry name" value="CENTROSOME78"/>
</dbReference>
<dbReference type="SMART" id="SM00368">
    <property type="entry name" value="LRR_RI"/>
    <property type="match status" value="4"/>
</dbReference>
<dbReference type="SUPFAM" id="SSF52047">
    <property type="entry name" value="RNI-like"/>
    <property type="match status" value="1"/>
</dbReference>
<name>CEP78_MOUSE</name>
<gene>
    <name evidence="8 10" type="primary">Cep78</name>
</gene>
<sequence>MIDSVKLRRDCAADFFSHYEYLCALQDSVPLPAVRACLRDGVLDFNADRLRAVDWAPLLSTLRVNRDLPLVAIKSSFQPWLGETVLRSGGADTHRICRNRVPAVRSKDISFQLCKALRGCLSVSGVLRNLELNGLILRERDLTSLTKGLSKSTSLVHLSLANCPIGDGGLEIICQGIKNSVTLKTVNFTGCNLTWQGACHMAKILKYQTMRRHEETWAESLRYRRPDLDCMAGLRRITLNCNTLIGDQGASAFADSLSEDLWLRALDLQQCGLTSEGAKALLEALETNRTLVVLDIRKNPLIDHSMMKAVIKKVLQNGRSADSEYQWVTSPSSKEPSKTAKQRKKTIVLGSSRKGKATIRIGLATKKPSSNGRKQGLGKDCYAPNPLPPGASGFLPWRTAERAKRSRSSSLIKTRDLSNHLKKSDFPVTVTVESPSSSETDETEDSSESVQEAPQKTSIKEETLQEKLEECLRQLKEERVIRLKADKRVSELEHENAQLRNINFSLSEALHAQSLTNMILDDEGVLGSIENSFQKFHAFLDLLKDAGLGQLATMAGIDQSDFHLLGRPQMNSTVNTPIQEQKALEDETLHPKQTATGQMQDIRFQKITSDALIPLPLNTVQDPASAQEAVGASRDHLGVVGLEQQEGSAAGFIAKTGSPLAGGIPGGRSQREEEVLSKHSRSSSEKGSTASEPSRRPSAERHPRKDLLSDADPPGNSESKGPGDRRSLLNEPIKSESLKKCISIKKENRIVTVSSKTIKSKPNLLEHSESDTLGSDFELQERVHSSAHLT</sequence>